<gene>
    <name type="primary">fimA</name>
</gene>
<keyword id="KW-1015">Disulfide bond</keyword>
<keyword id="KW-0281">Fimbrium</keyword>
<keyword id="KW-0472">Membrane</keyword>
<keyword id="KW-0488">Methylation</keyword>
<keyword id="KW-0812">Transmembrane</keyword>
<keyword id="KW-1133">Transmembrane helix</keyword>
<sequence length="160" mass="16813">MKSLQKGFTLIELMIVVAIIGILAAFAIPAYNDYIARTQVSEGVSLADGLKIRIADNLQDGDCTTKGDASTGEVGNEDKGKYALATIEGTPAANLSELKAEEKNGCLVKIEYGKGTSGGSVSALINNTELVLAQLANGSYVKESATVKDKFLPKALKETK</sequence>
<evidence type="ECO:0000250" key="1">
    <source>
        <dbReference type="UniProtKB" id="A5EWR9"/>
    </source>
</evidence>
<evidence type="ECO:0000255" key="2"/>
<evidence type="ECO:0000255" key="3">
    <source>
        <dbReference type="PROSITE-ProRule" id="PRU01070"/>
    </source>
</evidence>
<evidence type="ECO:0000269" key="4">
    <source>
    </source>
</evidence>
<evidence type="ECO:0000305" key="5"/>
<accession>P17823</accession>
<reference key="1">
    <citation type="journal article" date="1991" name="Mol. Microbiol.">
        <title>Gene sequences and comparison of the fimbrial subunits representative of Bacteroides nodosus serotypes A to I: class I and class II strains.</title>
        <authorList>
            <person name="Mattick J.S."/>
            <person name="Anderson B.J."/>
            <person name="Cox P.T."/>
            <person name="Dalrymple B.P."/>
            <person name="Bills M.M."/>
            <person name="Hobbs M."/>
            <person name="Egerton J.R."/>
        </authorList>
    </citation>
    <scope>NUCLEOTIDE SEQUENCE [GENOMIC DNA]</scope>
    <source>
        <strain>Serogroup C1 isolate VCS1008</strain>
    </source>
</reference>
<reference key="2">
    <citation type="journal article" date="1988" name="J. Protein Chem.">
        <title>Amino acid sequences of pilins from serologically distinct strains of Bacteroides nodosus.</title>
        <authorList>
            <person name="McKern N.M."/>
            <person name="Stewart D.J."/>
            <person name="Strike P.M."/>
        </authorList>
    </citation>
    <scope>METHYLATION AT PHE-8</scope>
    <scope>DISULFIDE BOND</scope>
    <source>
        <strain>Serogroup C isolate 217</strain>
    </source>
</reference>
<name>FMA1_DICNO</name>
<feature type="propeptide" id="PRO_0000024123" description="Leader sequence" evidence="3">
    <location>
        <begin position="1"/>
        <end position="7"/>
    </location>
</feature>
<feature type="chain" id="PRO_0000024124" description="Type IV major fimbrial protein FimA" evidence="4">
    <location>
        <begin position="8"/>
        <end position="160"/>
    </location>
</feature>
<feature type="transmembrane region" description="Helical" evidence="2">
    <location>
        <begin position="8"/>
        <end position="28"/>
    </location>
</feature>
<feature type="modified residue" description="N-methylphenylalanine" evidence="3 4">
    <location>
        <position position="8"/>
    </location>
</feature>
<feature type="disulfide bond" evidence="4">
    <location>
        <begin position="63"/>
        <end position="106"/>
    </location>
</feature>
<protein>
    <recommendedName>
        <fullName>Type IV major fimbrial protein FimA</fullName>
    </recommendedName>
    <alternativeName>
        <fullName>Pilin</fullName>
    </alternativeName>
    <alternativeName>
        <fullName>Serogroup C1</fullName>
    </alternativeName>
</protein>
<comment type="function">
    <text evidence="1">Major component of the type IV fimbriae that plays an essential role in twitching motility, natural transformation, and protease secretion.</text>
</comment>
<comment type="subunit">
    <text>The pili are polar flexible filaments of about 5.4 nanometers diameter and 2.5 micrometers average length; they consist of only a single polypeptide chain arranged in a helical configuration of five subunits per turn in the assembled pilus.</text>
</comment>
<comment type="subcellular location">
    <subcellularLocation>
        <location evidence="1">Fimbrium</location>
    </subcellularLocation>
    <subcellularLocation>
        <location evidence="2">Membrane</location>
        <topology evidence="2">Single-pass membrane protein</topology>
    </subcellularLocation>
</comment>
<comment type="similarity">
    <text evidence="5">Belongs to the N-Me-Phe pilin family.</text>
</comment>
<proteinExistence type="evidence at protein level"/>
<organism>
    <name type="scientific">Dichelobacter nodosus</name>
    <name type="common">Bacteroides nodosus</name>
    <dbReference type="NCBI Taxonomy" id="870"/>
    <lineage>
        <taxon>Bacteria</taxon>
        <taxon>Pseudomonadati</taxon>
        <taxon>Pseudomonadota</taxon>
        <taxon>Gammaproteobacteria</taxon>
        <taxon>Cardiobacteriales</taxon>
        <taxon>Cardiobacteriaceae</taxon>
        <taxon>Dichelobacter</taxon>
    </lineage>
</organism>
<dbReference type="EMBL" id="X52405">
    <property type="protein sequence ID" value="CAA36652.1"/>
    <property type="molecule type" value="Genomic_DNA"/>
</dbReference>
<dbReference type="PIR" id="S15260">
    <property type="entry name" value="S15260"/>
</dbReference>
<dbReference type="SMR" id="P17823"/>
<dbReference type="iPTMnet" id="P17823"/>
<dbReference type="GO" id="GO:0016020">
    <property type="term" value="C:membrane"/>
    <property type="evidence" value="ECO:0007669"/>
    <property type="project" value="UniProtKB-SubCell"/>
</dbReference>
<dbReference type="GO" id="GO:0009289">
    <property type="term" value="C:pilus"/>
    <property type="evidence" value="ECO:0007669"/>
    <property type="project" value="UniProtKB-SubCell"/>
</dbReference>
<dbReference type="GO" id="GO:0007155">
    <property type="term" value="P:cell adhesion"/>
    <property type="evidence" value="ECO:0007669"/>
    <property type="project" value="InterPro"/>
</dbReference>
<dbReference type="Gene3D" id="3.30.700.10">
    <property type="entry name" value="Glycoprotein, Type 4 Pilin"/>
    <property type="match status" value="1"/>
</dbReference>
<dbReference type="InterPro" id="IPR012902">
    <property type="entry name" value="N_methyl_site"/>
</dbReference>
<dbReference type="InterPro" id="IPR001082">
    <property type="entry name" value="Pilin"/>
</dbReference>
<dbReference type="InterPro" id="IPR045584">
    <property type="entry name" value="Pilin-like"/>
</dbReference>
<dbReference type="InterPro" id="IPR050470">
    <property type="entry name" value="T4P/T2SS_Core"/>
</dbReference>
<dbReference type="NCBIfam" id="TIGR02532">
    <property type="entry name" value="IV_pilin_GFxxxE"/>
    <property type="match status" value="1"/>
</dbReference>
<dbReference type="PANTHER" id="PTHR30093">
    <property type="entry name" value="GENERAL SECRETION PATHWAY PROTEIN G"/>
    <property type="match status" value="1"/>
</dbReference>
<dbReference type="PANTHER" id="PTHR30093:SF34">
    <property type="entry name" value="PREPILIN PEPTIDASE-DEPENDENT PROTEIN D"/>
    <property type="match status" value="1"/>
</dbReference>
<dbReference type="Pfam" id="PF07963">
    <property type="entry name" value="N_methyl"/>
    <property type="match status" value="1"/>
</dbReference>
<dbReference type="Pfam" id="PF00114">
    <property type="entry name" value="Pilin"/>
    <property type="match status" value="1"/>
</dbReference>
<dbReference type="SUPFAM" id="SSF54523">
    <property type="entry name" value="Pili subunits"/>
    <property type="match status" value="1"/>
</dbReference>
<dbReference type="PROSITE" id="PS00409">
    <property type="entry name" value="PROKAR_NTER_METHYL"/>
    <property type="match status" value="1"/>
</dbReference>